<protein>
    <recommendedName>
        <fullName evidence="1">Beta-ketoacyl-[acyl-carrier-protein] synthase III</fullName>
        <shortName evidence="1">Beta-ketoacyl-ACP synthase III</shortName>
        <shortName evidence="1">KAS III</shortName>
        <ecNumber evidence="1">2.3.1.180</ecNumber>
    </recommendedName>
    <alternativeName>
        <fullName evidence="1">3-oxoacyl-[acyl-carrier-protein] synthase 3</fullName>
    </alternativeName>
    <alternativeName>
        <fullName evidence="1">3-oxoacyl-[acyl-carrier-protein] synthase III</fullName>
    </alternativeName>
</protein>
<evidence type="ECO:0000255" key="1">
    <source>
        <dbReference type="HAMAP-Rule" id="MF_01815"/>
    </source>
</evidence>
<proteinExistence type="inferred from homology"/>
<gene>
    <name evidence="1" type="primary">fabH</name>
    <name type="ordered locus">MAE_19470</name>
</gene>
<comment type="function">
    <text evidence="1">Catalyzes the condensation reaction of fatty acid synthesis by the addition to an acyl acceptor of two carbons from malonyl-ACP. Catalyzes the first condensation reaction which initiates fatty acid synthesis and may therefore play a role in governing the total rate of fatty acid production. Possesses both acetoacetyl-ACP synthase and acetyl transacylase activities. Its substrate specificity determines the biosynthesis of branched-chain and/or straight-chain of fatty acids.</text>
</comment>
<comment type="catalytic activity">
    <reaction evidence="1">
        <text>malonyl-[ACP] + acetyl-CoA + H(+) = 3-oxobutanoyl-[ACP] + CO2 + CoA</text>
        <dbReference type="Rhea" id="RHEA:12080"/>
        <dbReference type="Rhea" id="RHEA-COMP:9623"/>
        <dbReference type="Rhea" id="RHEA-COMP:9625"/>
        <dbReference type="ChEBI" id="CHEBI:15378"/>
        <dbReference type="ChEBI" id="CHEBI:16526"/>
        <dbReference type="ChEBI" id="CHEBI:57287"/>
        <dbReference type="ChEBI" id="CHEBI:57288"/>
        <dbReference type="ChEBI" id="CHEBI:78449"/>
        <dbReference type="ChEBI" id="CHEBI:78450"/>
        <dbReference type="EC" id="2.3.1.180"/>
    </reaction>
</comment>
<comment type="pathway">
    <text evidence="1">Lipid metabolism; fatty acid biosynthesis.</text>
</comment>
<comment type="subunit">
    <text evidence="1">Homodimer.</text>
</comment>
<comment type="subcellular location">
    <subcellularLocation>
        <location evidence="1">Cytoplasm</location>
    </subcellularLocation>
</comment>
<comment type="domain">
    <text evidence="1">The last Arg residue of the ACP-binding site is essential for the weak association between ACP/AcpP and FabH.</text>
</comment>
<comment type="similarity">
    <text evidence="1">Belongs to the thiolase-like superfamily. FabH family.</text>
</comment>
<feature type="chain" id="PRO_1000088315" description="Beta-ketoacyl-[acyl-carrier-protein] synthase III">
    <location>
        <begin position="1"/>
        <end position="333"/>
    </location>
</feature>
<feature type="region of interest" description="ACP-binding" evidence="1">
    <location>
        <begin position="259"/>
        <end position="263"/>
    </location>
</feature>
<feature type="active site" evidence="1">
    <location>
        <position position="116"/>
    </location>
</feature>
<feature type="active site" evidence="1">
    <location>
        <position position="258"/>
    </location>
</feature>
<feature type="active site" evidence="1">
    <location>
        <position position="288"/>
    </location>
</feature>
<keyword id="KW-0012">Acyltransferase</keyword>
<keyword id="KW-0963">Cytoplasm</keyword>
<keyword id="KW-0275">Fatty acid biosynthesis</keyword>
<keyword id="KW-0276">Fatty acid metabolism</keyword>
<keyword id="KW-0444">Lipid biosynthesis</keyword>
<keyword id="KW-0443">Lipid metabolism</keyword>
<keyword id="KW-0511">Multifunctional enzyme</keyword>
<keyword id="KW-0808">Transferase</keyword>
<name>FABH_MICAN</name>
<dbReference type="EC" id="2.3.1.180" evidence="1"/>
<dbReference type="EMBL" id="AP009552">
    <property type="protein sequence ID" value="BAG01769.1"/>
    <property type="molecule type" value="Genomic_DNA"/>
</dbReference>
<dbReference type="RefSeq" id="WP_002798357.1">
    <property type="nucleotide sequence ID" value="NC_010296.1"/>
</dbReference>
<dbReference type="SMR" id="B0JXE2"/>
<dbReference type="STRING" id="449447.MAE_19470"/>
<dbReference type="PaxDb" id="449447-MAE_19470"/>
<dbReference type="EnsemblBacteria" id="BAG01769">
    <property type="protein sequence ID" value="BAG01769"/>
    <property type="gene ID" value="MAE_19470"/>
</dbReference>
<dbReference type="KEGG" id="mar:MAE_19470"/>
<dbReference type="eggNOG" id="COG0332">
    <property type="taxonomic scope" value="Bacteria"/>
</dbReference>
<dbReference type="HOGENOM" id="CLU_039592_0_1_3"/>
<dbReference type="BioCyc" id="MAER449447:MAE_RS08525-MONOMER"/>
<dbReference type="UniPathway" id="UPA00094"/>
<dbReference type="Proteomes" id="UP000001510">
    <property type="component" value="Chromosome"/>
</dbReference>
<dbReference type="GO" id="GO:0005737">
    <property type="term" value="C:cytoplasm"/>
    <property type="evidence" value="ECO:0007669"/>
    <property type="project" value="UniProtKB-SubCell"/>
</dbReference>
<dbReference type="GO" id="GO:0004315">
    <property type="term" value="F:3-oxoacyl-[acyl-carrier-protein] synthase activity"/>
    <property type="evidence" value="ECO:0007669"/>
    <property type="project" value="InterPro"/>
</dbReference>
<dbReference type="GO" id="GO:0033818">
    <property type="term" value="F:beta-ketoacyl-acyl-carrier-protein synthase III activity"/>
    <property type="evidence" value="ECO:0007669"/>
    <property type="project" value="UniProtKB-UniRule"/>
</dbReference>
<dbReference type="GO" id="GO:0006633">
    <property type="term" value="P:fatty acid biosynthetic process"/>
    <property type="evidence" value="ECO:0007669"/>
    <property type="project" value="UniProtKB-UniRule"/>
</dbReference>
<dbReference type="CDD" id="cd00830">
    <property type="entry name" value="KAS_III"/>
    <property type="match status" value="1"/>
</dbReference>
<dbReference type="FunFam" id="3.40.47.10:FF:000004">
    <property type="entry name" value="3-oxoacyl-[acyl-carrier-protein] synthase 3"/>
    <property type="match status" value="1"/>
</dbReference>
<dbReference type="Gene3D" id="3.40.47.10">
    <property type="match status" value="1"/>
</dbReference>
<dbReference type="HAMAP" id="MF_01815">
    <property type="entry name" value="FabH"/>
    <property type="match status" value="1"/>
</dbReference>
<dbReference type="InterPro" id="IPR013747">
    <property type="entry name" value="ACP_syn_III_C"/>
</dbReference>
<dbReference type="InterPro" id="IPR013751">
    <property type="entry name" value="ACP_syn_III_N"/>
</dbReference>
<dbReference type="InterPro" id="IPR004655">
    <property type="entry name" value="FabH"/>
</dbReference>
<dbReference type="InterPro" id="IPR016039">
    <property type="entry name" value="Thiolase-like"/>
</dbReference>
<dbReference type="NCBIfam" id="TIGR00747">
    <property type="entry name" value="fabH"/>
    <property type="match status" value="1"/>
</dbReference>
<dbReference type="NCBIfam" id="NF006829">
    <property type="entry name" value="PRK09352.1"/>
    <property type="match status" value="1"/>
</dbReference>
<dbReference type="PANTHER" id="PTHR43091">
    <property type="entry name" value="3-OXOACYL-[ACYL-CARRIER-PROTEIN] SYNTHASE"/>
    <property type="match status" value="1"/>
</dbReference>
<dbReference type="PANTHER" id="PTHR43091:SF1">
    <property type="entry name" value="BETA-KETOACYL-[ACYL-CARRIER-PROTEIN] SYNTHASE III, CHLOROPLASTIC"/>
    <property type="match status" value="1"/>
</dbReference>
<dbReference type="Pfam" id="PF08545">
    <property type="entry name" value="ACP_syn_III"/>
    <property type="match status" value="1"/>
</dbReference>
<dbReference type="Pfam" id="PF08541">
    <property type="entry name" value="ACP_syn_III_C"/>
    <property type="match status" value="1"/>
</dbReference>
<dbReference type="SUPFAM" id="SSF53901">
    <property type="entry name" value="Thiolase-like"/>
    <property type="match status" value="1"/>
</dbReference>
<sequence length="333" mass="35705">MNGFGAAVVITGCGSATPAQFLSNEELSQIVETSDEWIKSRTGIGKRHLADRSVSLSQLAAQAAIKALEMAQVSPRDIDLILLATSTPDDLFGSAAQVQSQIGANRAIAFDLTAACSGFLVGLVTATQFIRTGTYRNVLVIGADVLSRWVDWNDRATCVLFGDGAGAVVCQANDTKDNILGFELHSDGSQNGSLNLAYEGEELPLKQGIRVQKGTYKPLRMNGREVYRFAVAKVPEVIEKALYRANLTTSDIDWLVLHQANQRIMDAVSERLKLPPEKVISNLSEYGNTSAASIPLALDEAVRSGKVKKGDIIASSGFGAGLTWGGIIFRWGD</sequence>
<accession>B0JXE2</accession>
<organism>
    <name type="scientific">Microcystis aeruginosa (strain NIES-843 / IAM M-2473)</name>
    <dbReference type="NCBI Taxonomy" id="449447"/>
    <lineage>
        <taxon>Bacteria</taxon>
        <taxon>Bacillati</taxon>
        <taxon>Cyanobacteriota</taxon>
        <taxon>Cyanophyceae</taxon>
        <taxon>Oscillatoriophycideae</taxon>
        <taxon>Chroococcales</taxon>
        <taxon>Microcystaceae</taxon>
        <taxon>Microcystis</taxon>
    </lineage>
</organism>
<reference key="1">
    <citation type="journal article" date="2007" name="DNA Res.">
        <title>Complete genomic structure of the bloom-forming toxic cyanobacterium Microcystis aeruginosa NIES-843.</title>
        <authorList>
            <person name="Kaneko T."/>
            <person name="Nakajima N."/>
            <person name="Okamoto S."/>
            <person name="Suzuki I."/>
            <person name="Tanabe Y."/>
            <person name="Tamaoki M."/>
            <person name="Nakamura Y."/>
            <person name="Kasai F."/>
            <person name="Watanabe A."/>
            <person name="Kawashima K."/>
            <person name="Kishida Y."/>
            <person name="Ono A."/>
            <person name="Shimizu Y."/>
            <person name="Takahashi C."/>
            <person name="Minami C."/>
            <person name="Fujishiro T."/>
            <person name="Kohara M."/>
            <person name="Katoh M."/>
            <person name="Nakazaki N."/>
            <person name="Nakayama S."/>
            <person name="Yamada M."/>
            <person name="Tabata S."/>
            <person name="Watanabe M.M."/>
        </authorList>
    </citation>
    <scope>NUCLEOTIDE SEQUENCE [LARGE SCALE GENOMIC DNA]</scope>
    <source>
        <strain>NIES-843 / IAM M-247</strain>
    </source>
</reference>